<dbReference type="EMBL" id="AP011115">
    <property type="protein sequence ID" value="BAH54459.1"/>
    <property type="molecule type" value="Genomic_DNA"/>
</dbReference>
<dbReference type="RefSeq" id="WP_005239677.1">
    <property type="nucleotide sequence ID" value="NC_012522.1"/>
</dbReference>
<dbReference type="SMR" id="C1B038"/>
<dbReference type="STRING" id="632772.ROP_62120"/>
<dbReference type="GeneID" id="69890542"/>
<dbReference type="KEGG" id="rop:ROP_62120"/>
<dbReference type="PATRIC" id="fig|632772.20.peg.6488"/>
<dbReference type="HOGENOM" id="CLU_103849_1_2_11"/>
<dbReference type="OrthoDB" id="9803610at2"/>
<dbReference type="Proteomes" id="UP000002212">
    <property type="component" value="Chromosome"/>
</dbReference>
<dbReference type="GO" id="GO:0005829">
    <property type="term" value="C:cytosol"/>
    <property type="evidence" value="ECO:0007669"/>
    <property type="project" value="TreeGrafter"/>
</dbReference>
<dbReference type="GO" id="GO:0015935">
    <property type="term" value="C:small ribosomal subunit"/>
    <property type="evidence" value="ECO:0007669"/>
    <property type="project" value="TreeGrafter"/>
</dbReference>
<dbReference type="GO" id="GO:0019843">
    <property type="term" value="F:rRNA binding"/>
    <property type="evidence" value="ECO:0007669"/>
    <property type="project" value="UniProtKB-UniRule"/>
</dbReference>
<dbReference type="GO" id="GO:0003735">
    <property type="term" value="F:structural constituent of ribosome"/>
    <property type="evidence" value="ECO:0007669"/>
    <property type="project" value="InterPro"/>
</dbReference>
<dbReference type="GO" id="GO:0000049">
    <property type="term" value="F:tRNA binding"/>
    <property type="evidence" value="ECO:0007669"/>
    <property type="project" value="UniProtKB-UniRule"/>
</dbReference>
<dbReference type="GO" id="GO:0006412">
    <property type="term" value="P:translation"/>
    <property type="evidence" value="ECO:0007669"/>
    <property type="project" value="UniProtKB-UniRule"/>
</dbReference>
<dbReference type="FunFam" id="1.10.8.50:FF:000001">
    <property type="entry name" value="30S ribosomal protein S13"/>
    <property type="match status" value="1"/>
</dbReference>
<dbReference type="FunFam" id="4.10.910.10:FF:000001">
    <property type="entry name" value="30S ribosomal protein S13"/>
    <property type="match status" value="1"/>
</dbReference>
<dbReference type="Gene3D" id="1.10.8.50">
    <property type="match status" value="1"/>
</dbReference>
<dbReference type="Gene3D" id="4.10.910.10">
    <property type="entry name" value="30s ribosomal protein s13, domain 2"/>
    <property type="match status" value="1"/>
</dbReference>
<dbReference type="HAMAP" id="MF_01315">
    <property type="entry name" value="Ribosomal_uS13"/>
    <property type="match status" value="1"/>
</dbReference>
<dbReference type="InterPro" id="IPR027437">
    <property type="entry name" value="Rbsml_uS13_C"/>
</dbReference>
<dbReference type="InterPro" id="IPR001892">
    <property type="entry name" value="Ribosomal_uS13"/>
</dbReference>
<dbReference type="InterPro" id="IPR010979">
    <property type="entry name" value="Ribosomal_uS13-like_H2TH"/>
</dbReference>
<dbReference type="InterPro" id="IPR019980">
    <property type="entry name" value="Ribosomal_uS13_bac-type"/>
</dbReference>
<dbReference type="InterPro" id="IPR018269">
    <property type="entry name" value="Ribosomal_uS13_CS"/>
</dbReference>
<dbReference type="NCBIfam" id="TIGR03631">
    <property type="entry name" value="uS13_bact"/>
    <property type="match status" value="1"/>
</dbReference>
<dbReference type="PANTHER" id="PTHR10871">
    <property type="entry name" value="30S RIBOSOMAL PROTEIN S13/40S RIBOSOMAL PROTEIN S18"/>
    <property type="match status" value="1"/>
</dbReference>
<dbReference type="PANTHER" id="PTHR10871:SF1">
    <property type="entry name" value="SMALL RIBOSOMAL SUBUNIT PROTEIN US13M"/>
    <property type="match status" value="1"/>
</dbReference>
<dbReference type="Pfam" id="PF00416">
    <property type="entry name" value="Ribosomal_S13"/>
    <property type="match status" value="1"/>
</dbReference>
<dbReference type="PIRSF" id="PIRSF002134">
    <property type="entry name" value="Ribosomal_S13"/>
    <property type="match status" value="1"/>
</dbReference>
<dbReference type="SUPFAM" id="SSF46946">
    <property type="entry name" value="S13-like H2TH domain"/>
    <property type="match status" value="1"/>
</dbReference>
<dbReference type="PROSITE" id="PS00646">
    <property type="entry name" value="RIBOSOMAL_S13_1"/>
    <property type="match status" value="1"/>
</dbReference>
<dbReference type="PROSITE" id="PS50159">
    <property type="entry name" value="RIBOSOMAL_S13_2"/>
    <property type="match status" value="1"/>
</dbReference>
<evidence type="ECO:0000255" key="1">
    <source>
        <dbReference type="HAMAP-Rule" id="MF_01315"/>
    </source>
</evidence>
<evidence type="ECO:0000256" key="2">
    <source>
        <dbReference type="SAM" id="MobiDB-lite"/>
    </source>
</evidence>
<evidence type="ECO:0000305" key="3"/>
<gene>
    <name evidence="1" type="primary">rpsM</name>
    <name type="ordered locus">ROP_62120</name>
</gene>
<comment type="function">
    <text evidence="1">Located at the top of the head of the 30S subunit, it contacts several helices of the 16S rRNA. In the 70S ribosome it contacts the 23S rRNA (bridge B1a) and protein L5 of the 50S subunit (bridge B1b), connecting the 2 subunits; these bridges are implicated in subunit movement. Contacts the tRNAs in the A and P-sites.</text>
</comment>
<comment type="subunit">
    <text evidence="1">Part of the 30S ribosomal subunit. Forms a loose heterodimer with protein S19. Forms two bridges to the 50S subunit in the 70S ribosome.</text>
</comment>
<comment type="similarity">
    <text evidence="1">Belongs to the universal ribosomal protein uS13 family.</text>
</comment>
<name>RS13_RHOOB</name>
<accession>C1B038</accession>
<reference key="1">
    <citation type="submission" date="2009-03" db="EMBL/GenBank/DDBJ databases">
        <title>Comparison of the complete genome sequences of Rhodococcus erythropolis PR4 and Rhodococcus opacus B4.</title>
        <authorList>
            <person name="Takarada H."/>
            <person name="Sekine M."/>
            <person name="Hosoyama A."/>
            <person name="Yamada R."/>
            <person name="Fujisawa T."/>
            <person name="Omata S."/>
            <person name="Shimizu A."/>
            <person name="Tsukatani N."/>
            <person name="Tanikawa S."/>
            <person name="Fujita N."/>
            <person name="Harayama S."/>
        </authorList>
    </citation>
    <scope>NUCLEOTIDE SEQUENCE [LARGE SCALE GENOMIC DNA]</scope>
    <source>
        <strain>B4</strain>
    </source>
</reference>
<feature type="chain" id="PRO_1000165634" description="Small ribosomal subunit protein uS13">
    <location>
        <begin position="1"/>
        <end position="124"/>
    </location>
</feature>
<feature type="region of interest" description="Disordered" evidence="2">
    <location>
        <begin position="95"/>
        <end position="124"/>
    </location>
</feature>
<keyword id="KW-0687">Ribonucleoprotein</keyword>
<keyword id="KW-0689">Ribosomal protein</keyword>
<keyword id="KW-0694">RNA-binding</keyword>
<keyword id="KW-0699">rRNA-binding</keyword>
<keyword id="KW-0820">tRNA-binding</keyword>
<sequence>MARLAGVDLPREKRMEIALTYIYGIGRTRSKEILDATGVSPDLRSKDLSDEDLAKLREYIEESLKVEGDLRREVQADIRRKIEIGCYQGLRHRRGLPVRGQRTKTNARTRKGPKRTIAGKKKAK</sequence>
<organism>
    <name type="scientific">Rhodococcus opacus (strain B4)</name>
    <dbReference type="NCBI Taxonomy" id="632772"/>
    <lineage>
        <taxon>Bacteria</taxon>
        <taxon>Bacillati</taxon>
        <taxon>Actinomycetota</taxon>
        <taxon>Actinomycetes</taxon>
        <taxon>Mycobacteriales</taxon>
        <taxon>Nocardiaceae</taxon>
        <taxon>Rhodococcus</taxon>
    </lineage>
</organism>
<protein>
    <recommendedName>
        <fullName evidence="1">Small ribosomal subunit protein uS13</fullName>
    </recommendedName>
    <alternativeName>
        <fullName evidence="3">30S ribosomal protein S13</fullName>
    </alternativeName>
</protein>
<proteinExistence type="inferred from homology"/>